<feature type="chain" id="PRO_0000077632" description="Protein ninH">
    <location>
        <begin position="1"/>
        <end position="68"/>
    </location>
</feature>
<accession>P03771</accession>
<organismHost>
    <name type="scientific">Escherichia coli</name>
    <dbReference type="NCBI Taxonomy" id="562"/>
</organismHost>
<proteinExistence type="inferred from homology"/>
<sequence>MTFSVKTIPDMLVEAYGNQTEVARRLKCSRGTVRKYVDDKDGKMHAIVNDVLMVHRGWSERDALLRKN</sequence>
<organism>
    <name type="scientific">Escherichia phage lambda</name>
    <name type="common">Bacteriophage lambda</name>
    <dbReference type="NCBI Taxonomy" id="2681611"/>
    <lineage>
        <taxon>Viruses</taxon>
        <taxon>Duplodnaviria</taxon>
        <taxon>Heunggongvirae</taxon>
        <taxon>Uroviricota</taxon>
        <taxon>Caudoviricetes</taxon>
        <taxon>Lambdavirus</taxon>
        <taxon>Lambdavirus lambda</taxon>
    </lineage>
</organism>
<gene>
    <name type="primary">ninH</name>
</gene>
<keyword id="KW-1185">Reference proteome</keyword>
<protein>
    <recommendedName>
        <fullName>Protein ninH</fullName>
    </recommendedName>
</protein>
<comment type="similarity">
    <text evidence="1">Belongs to the ninH family.</text>
</comment>
<evidence type="ECO:0000305" key="1"/>
<name>NINH_LAMBD</name>
<dbReference type="EMBL" id="J02459">
    <property type="protein sequence ID" value="AAA96593.1"/>
    <property type="molecule type" value="Genomic_DNA"/>
</dbReference>
<dbReference type="PIR" id="F43011">
    <property type="entry name" value="Q1BP0L"/>
</dbReference>
<dbReference type="RefSeq" id="NP_040640.1">
    <property type="nucleotide sequence ID" value="NC_001416.1"/>
</dbReference>
<dbReference type="SASBDB" id="P03771"/>
<dbReference type="SMR" id="P03771"/>
<dbReference type="GeneID" id="2703475"/>
<dbReference type="KEGG" id="vg:2703475"/>
<dbReference type="Proteomes" id="UP000001711">
    <property type="component" value="Genome"/>
</dbReference>
<dbReference type="InterPro" id="IPR010454">
    <property type="entry name" value="Phage_NinH"/>
</dbReference>
<dbReference type="Pfam" id="PF06322">
    <property type="entry name" value="Phage_NinH"/>
    <property type="match status" value="1"/>
</dbReference>
<reference key="1">
    <citation type="journal article" date="1982" name="J. Mol. Biol.">
        <title>Nucleotide sequence of bacteriophage lambda DNA.</title>
        <authorList>
            <person name="Sanger F."/>
            <person name="Coulson A.R."/>
            <person name="Hong G.F."/>
            <person name="Hill D.F."/>
            <person name="Petersen G.B."/>
        </authorList>
    </citation>
    <scope>NUCLEOTIDE SEQUENCE [LARGE SCALE GENOMIC DNA]</scope>
</reference>
<reference key="2">
    <citation type="journal article" date="1982" name="Gene">
        <title>A chain of interlinked genes in the ninR region of bacteriophage lambda.</title>
        <authorList>
            <person name="Kroger M."/>
            <person name="Hobom G."/>
        </authorList>
    </citation>
    <scope>NUCLEOTIDE SEQUENCE [GENOMIC DNA]</scope>
</reference>